<proteinExistence type="inferred from homology"/>
<gene>
    <name evidence="1" type="primary">rpmI</name>
    <name type="ordered locus">APJL_0225</name>
</gene>
<accession>B0BSM7</accession>
<protein>
    <recommendedName>
        <fullName evidence="1">Large ribosomal subunit protein bL35</fullName>
    </recommendedName>
    <alternativeName>
        <fullName evidence="3">50S ribosomal protein L35</fullName>
    </alternativeName>
</protein>
<organism>
    <name type="scientific">Actinobacillus pleuropneumoniae serotype 3 (strain JL03)</name>
    <dbReference type="NCBI Taxonomy" id="434271"/>
    <lineage>
        <taxon>Bacteria</taxon>
        <taxon>Pseudomonadati</taxon>
        <taxon>Pseudomonadota</taxon>
        <taxon>Gammaproteobacteria</taxon>
        <taxon>Pasteurellales</taxon>
        <taxon>Pasteurellaceae</taxon>
        <taxon>Actinobacillus</taxon>
    </lineage>
</organism>
<comment type="similarity">
    <text evidence="1">Belongs to the bacterial ribosomal protein bL35 family.</text>
</comment>
<dbReference type="EMBL" id="CP000687">
    <property type="protein sequence ID" value="ABY68829.1"/>
    <property type="molecule type" value="Genomic_DNA"/>
</dbReference>
<dbReference type="RefSeq" id="WP_005596065.1">
    <property type="nucleotide sequence ID" value="NC_010278.1"/>
</dbReference>
<dbReference type="SMR" id="B0BSM7"/>
<dbReference type="GeneID" id="93297699"/>
<dbReference type="KEGG" id="apj:APJL_0225"/>
<dbReference type="HOGENOM" id="CLU_169643_1_1_6"/>
<dbReference type="Proteomes" id="UP000008547">
    <property type="component" value="Chromosome"/>
</dbReference>
<dbReference type="GO" id="GO:0022625">
    <property type="term" value="C:cytosolic large ribosomal subunit"/>
    <property type="evidence" value="ECO:0007669"/>
    <property type="project" value="TreeGrafter"/>
</dbReference>
<dbReference type="GO" id="GO:0003735">
    <property type="term" value="F:structural constituent of ribosome"/>
    <property type="evidence" value="ECO:0007669"/>
    <property type="project" value="InterPro"/>
</dbReference>
<dbReference type="GO" id="GO:0006412">
    <property type="term" value="P:translation"/>
    <property type="evidence" value="ECO:0007669"/>
    <property type="project" value="UniProtKB-UniRule"/>
</dbReference>
<dbReference type="FunFam" id="4.10.410.60:FF:000001">
    <property type="entry name" value="50S ribosomal protein L35"/>
    <property type="match status" value="1"/>
</dbReference>
<dbReference type="Gene3D" id="4.10.410.60">
    <property type="match status" value="1"/>
</dbReference>
<dbReference type="HAMAP" id="MF_00514">
    <property type="entry name" value="Ribosomal_bL35"/>
    <property type="match status" value="1"/>
</dbReference>
<dbReference type="InterPro" id="IPR001706">
    <property type="entry name" value="Ribosomal_bL35"/>
</dbReference>
<dbReference type="InterPro" id="IPR021137">
    <property type="entry name" value="Ribosomal_bL35-like"/>
</dbReference>
<dbReference type="InterPro" id="IPR018265">
    <property type="entry name" value="Ribosomal_bL35_CS"/>
</dbReference>
<dbReference type="InterPro" id="IPR037229">
    <property type="entry name" value="Ribosomal_bL35_sf"/>
</dbReference>
<dbReference type="NCBIfam" id="TIGR00001">
    <property type="entry name" value="rpmI_bact"/>
    <property type="match status" value="1"/>
</dbReference>
<dbReference type="PANTHER" id="PTHR33343">
    <property type="entry name" value="54S RIBOSOMAL PROTEIN BL35M"/>
    <property type="match status" value="1"/>
</dbReference>
<dbReference type="PANTHER" id="PTHR33343:SF1">
    <property type="entry name" value="LARGE RIBOSOMAL SUBUNIT PROTEIN BL35M"/>
    <property type="match status" value="1"/>
</dbReference>
<dbReference type="Pfam" id="PF01632">
    <property type="entry name" value="Ribosomal_L35p"/>
    <property type="match status" value="1"/>
</dbReference>
<dbReference type="PRINTS" id="PR00064">
    <property type="entry name" value="RIBOSOMALL35"/>
</dbReference>
<dbReference type="SUPFAM" id="SSF143034">
    <property type="entry name" value="L35p-like"/>
    <property type="match status" value="1"/>
</dbReference>
<dbReference type="PROSITE" id="PS00936">
    <property type="entry name" value="RIBOSOMAL_L35"/>
    <property type="match status" value="1"/>
</dbReference>
<evidence type="ECO:0000255" key="1">
    <source>
        <dbReference type="HAMAP-Rule" id="MF_00514"/>
    </source>
</evidence>
<evidence type="ECO:0000256" key="2">
    <source>
        <dbReference type="SAM" id="MobiDB-lite"/>
    </source>
</evidence>
<evidence type="ECO:0000305" key="3"/>
<reference key="1">
    <citation type="journal article" date="2008" name="PLoS ONE">
        <title>Genome biology of Actinobacillus pleuropneumoniae JL03, an isolate of serotype 3 prevalent in China.</title>
        <authorList>
            <person name="Xu Z."/>
            <person name="Zhou Y."/>
            <person name="Li L."/>
            <person name="Zhou R."/>
            <person name="Xiao S."/>
            <person name="Wan Y."/>
            <person name="Zhang S."/>
            <person name="Wang K."/>
            <person name="Li W."/>
            <person name="Li L."/>
            <person name="Jin H."/>
            <person name="Kang M."/>
            <person name="Dalai B."/>
            <person name="Li T."/>
            <person name="Liu L."/>
            <person name="Cheng Y."/>
            <person name="Zhang L."/>
            <person name="Xu T."/>
            <person name="Zheng H."/>
            <person name="Pu S."/>
            <person name="Wang B."/>
            <person name="Gu W."/>
            <person name="Zhang X.L."/>
            <person name="Zhu G.-F."/>
            <person name="Wang S."/>
            <person name="Zhao G.-P."/>
            <person name="Chen H."/>
        </authorList>
    </citation>
    <scope>NUCLEOTIDE SEQUENCE [LARGE SCALE GENOMIC DNA]</scope>
    <source>
        <strain>JL03</strain>
    </source>
</reference>
<feature type="chain" id="PRO_1000127298" description="Large ribosomal subunit protein bL35">
    <location>
        <begin position="1"/>
        <end position="65"/>
    </location>
</feature>
<feature type="region of interest" description="Disordered" evidence="2">
    <location>
        <begin position="1"/>
        <end position="26"/>
    </location>
</feature>
<feature type="compositionally biased region" description="Basic residues" evidence="2">
    <location>
        <begin position="10"/>
        <end position="26"/>
    </location>
</feature>
<keyword id="KW-0687">Ribonucleoprotein</keyword>
<keyword id="KW-0689">Ribosomal protein</keyword>
<sequence length="65" mass="7438">MPKIKTVRGAAKRFKKTASGGFKRKQSHLRHILTKKTTKRKRHLRHKSMVAKADQVLVVACLPYA</sequence>
<name>RL35_ACTPJ</name>